<accession>Q65143</accession>
<gene>
    <name type="ordered locus">Ba71V-040</name>
    <name type="ORF">A859L</name>
</gene>
<dbReference type="EC" id="3.6.4.-"/>
<dbReference type="EMBL" id="U18466">
    <property type="protein sequence ID" value="AAA65270.1"/>
    <property type="molecule type" value="Genomic_DNA"/>
</dbReference>
<dbReference type="RefSeq" id="NP_042734.1">
    <property type="nucleotide sequence ID" value="NC_001659.2"/>
</dbReference>
<dbReference type="SMR" id="Q65143"/>
<dbReference type="GeneID" id="22220422"/>
<dbReference type="KEGG" id="vg:22220422"/>
<dbReference type="Proteomes" id="UP000000624">
    <property type="component" value="Segment"/>
</dbReference>
<dbReference type="GO" id="GO:0005524">
    <property type="term" value="F:ATP binding"/>
    <property type="evidence" value="ECO:0007669"/>
    <property type="project" value="UniProtKB-KW"/>
</dbReference>
<dbReference type="GO" id="GO:0003677">
    <property type="term" value="F:DNA binding"/>
    <property type="evidence" value="ECO:0007669"/>
    <property type="project" value="InterPro"/>
</dbReference>
<dbReference type="GO" id="GO:0004386">
    <property type="term" value="F:helicase activity"/>
    <property type="evidence" value="ECO:0007669"/>
    <property type="project" value="UniProtKB-KW"/>
</dbReference>
<dbReference type="GO" id="GO:0016787">
    <property type="term" value="F:hydrolase activity"/>
    <property type="evidence" value="ECO:0007669"/>
    <property type="project" value="UniProtKB-KW"/>
</dbReference>
<dbReference type="Gene3D" id="3.40.50.300">
    <property type="entry name" value="P-loop containing nucleotide triphosphate hydrolases"/>
    <property type="match status" value="2"/>
</dbReference>
<dbReference type="InterPro" id="IPR006935">
    <property type="entry name" value="Helicase/UvrB_N"/>
</dbReference>
<dbReference type="InterPro" id="IPR014001">
    <property type="entry name" value="Helicase_ATP-bd"/>
</dbReference>
<dbReference type="InterPro" id="IPR001650">
    <property type="entry name" value="Helicase_C-like"/>
</dbReference>
<dbReference type="InterPro" id="IPR050742">
    <property type="entry name" value="Helicase_Restrict-Modif_Enz"/>
</dbReference>
<dbReference type="InterPro" id="IPR027417">
    <property type="entry name" value="P-loop_NTPase"/>
</dbReference>
<dbReference type="InterPro" id="IPR018306">
    <property type="entry name" value="Phage_T5_Orf172_DNA-bd"/>
</dbReference>
<dbReference type="PANTHER" id="PTHR47396:SF1">
    <property type="entry name" value="ATP-DEPENDENT HELICASE IRC3-RELATED"/>
    <property type="match status" value="1"/>
</dbReference>
<dbReference type="PANTHER" id="PTHR47396">
    <property type="entry name" value="TYPE I RESTRICTION ENZYME ECOKI R PROTEIN"/>
    <property type="match status" value="1"/>
</dbReference>
<dbReference type="Pfam" id="PF00271">
    <property type="entry name" value="Helicase_C"/>
    <property type="match status" value="1"/>
</dbReference>
<dbReference type="Pfam" id="PF04851">
    <property type="entry name" value="ResIII"/>
    <property type="match status" value="1"/>
</dbReference>
<dbReference type="Pfam" id="PF10544">
    <property type="entry name" value="T5orf172"/>
    <property type="match status" value="1"/>
</dbReference>
<dbReference type="SMART" id="SM00487">
    <property type="entry name" value="DEXDc"/>
    <property type="match status" value="1"/>
</dbReference>
<dbReference type="SUPFAM" id="SSF52540">
    <property type="entry name" value="P-loop containing nucleoside triphosphate hydrolases"/>
    <property type="match status" value="1"/>
</dbReference>
<dbReference type="PROSITE" id="PS51192">
    <property type="entry name" value="HELICASE_ATP_BIND_1"/>
    <property type="match status" value="1"/>
</dbReference>
<dbReference type="PROSITE" id="PS51194">
    <property type="entry name" value="HELICASE_CTER"/>
    <property type="match status" value="1"/>
</dbReference>
<keyword id="KW-0067">ATP-binding</keyword>
<keyword id="KW-0347">Helicase</keyword>
<keyword id="KW-0378">Hydrolase</keyword>
<keyword id="KW-0547">Nucleotide-binding</keyword>
<keyword id="KW-1185">Reference proteome</keyword>
<organismHost>
    <name type="scientific">Ornithodoros</name>
    <name type="common">relapsing fever ticks</name>
    <dbReference type="NCBI Taxonomy" id="6937"/>
</organismHost>
<organismHost>
    <name type="scientific">Sus scrofa</name>
    <name type="common">Pig</name>
    <dbReference type="NCBI Taxonomy" id="9823"/>
</organismHost>
<organism>
    <name type="scientific">African swine fever virus (strain Badajoz 1971 Vero-adapted)</name>
    <name type="common">Ba71V</name>
    <name type="synonym">ASFV</name>
    <dbReference type="NCBI Taxonomy" id="10498"/>
    <lineage>
        <taxon>Viruses</taxon>
        <taxon>Varidnaviria</taxon>
        <taxon>Bamfordvirae</taxon>
        <taxon>Nucleocytoviricota</taxon>
        <taxon>Pokkesviricetes</taxon>
        <taxon>Asfuvirales</taxon>
        <taxon>Asfarviridae</taxon>
        <taxon>Asfivirus</taxon>
        <taxon>African swine fever virus</taxon>
    </lineage>
</organism>
<sequence>MCAGFYVAVHPWLEAQSLHKVGHTGNLAARLHDGSYTTCFTDEWKYCFTLETSTKKDAQKIEAGVLYCAQFFRVKNKELVCLLPEKIKQLAEDVANCLDISYTLCDSPTYEMNDSTIVVEPSLPSDPLISKEKLRHLVITPVEDEEHFADDVLFFSTDETRTAIEDRLYQKEAANMGYQELRRSGRAILQMACRCGKTRVAYLILSNYLQGKVLYLVPGLSLLRQTLEKLYQYGISLKNVLLVGSDQTRIVLNHDNIEMTTNPVFIAKRIREAPSLLVIATYQSSTLLVDDFDLIISDECHRICGEWETRPFTHVLLNFKKGHRLFLTATPRYDTPLSMKNRELFGGVAFRYYLREGIEAGYVNDFELQMVAAPKLAHQPSNREETTKQIIVKQIIMALAYLKTNIPAPKMLVFTRDIKQARELYAELVDQGVYALIAHSTLPRQVILKTFTEFCSSKEPVILLNCRLFQEGVEVPELNAVFFAAPRHSPRDIIQSICRPLNKQVQKPHATIFLPLEVNTENVCLDRFSSIIPFADALASEDPRFYEHLLNPSEVAYPINWIGAHGSVSELLQLARHAIRYGTQGKIDRLTRSERLPWKAAFAELKRTVEICCRYPKINDGFHFGGATLRFDTWYKWVIKSYLQYKNKEPSSLEPYQVSDLESLQDWTTRGVGGPYPWEESMAFLETWLAQNKGELVAIDIHQGGWIGLDATPMERLSGVLTTVSQRDGRSYGKNKKLRPKKGFMIPPQQAEDLDRIFGKHNLKWRKDRVNGFLKEDEHGNYTGEPTCIQEAYRTFKEYVKTNPEYIEKYWPGYAKGKHKHQELPHIWESGLAPPRYKAFKDGNKQLIQRSPKKKDIKN</sequence>
<name>VF859_ASFB7</name>
<comment type="similarity">
    <text evidence="3">Belongs to the asfivirus helicase A859L family.</text>
</comment>
<evidence type="ECO:0000255" key="1">
    <source>
        <dbReference type="PROSITE-ProRule" id="PRU00541"/>
    </source>
</evidence>
<evidence type="ECO:0000255" key="2">
    <source>
        <dbReference type="PROSITE-ProRule" id="PRU00542"/>
    </source>
</evidence>
<evidence type="ECO:0000305" key="3"/>
<proteinExistence type="inferred from homology"/>
<reference key="1">
    <citation type="journal article" date="1995" name="Virology">
        <title>Analysis of the complete nucleotide sequence of African swine fever virus.</title>
        <authorList>
            <person name="Yanez R.J."/>
            <person name="Rodriguez J.M."/>
            <person name="Nogal M.L."/>
            <person name="Yuste L."/>
            <person name="Enriquez C."/>
            <person name="Rodriguez J.F."/>
            <person name="Vinuela E."/>
        </authorList>
    </citation>
    <scope>NUCLEOTIDE SEQUENCE [LARGE SCALE GENOMIC DNA]</scope>
</reference>
<feature type="chain" id="PRO_0000355211" description="Probable helicase A859L">
    <location>
        <begin position="1"/>
        <end position="859"/>
    </location>
</feature>
<feature type="domain" description="Helicase ATP-binding" evidence="1">
    <location>
        <begin position="178"/>
        <end position="349"/>
    </location>
</feature>
<feature type="domain" description="Helicase C-terminal" evidence="2">
    <location>
        <begin position="394"/>
        <end position="553"/>
    </location>
</feature>
<feature type="short sequence motif" description="DEAH box">
    <location>
        <begin position="298"/>
        <end position="301"/>
    </location>
</feature>
<feature type="binding site" evidence="1">
    <location>
        <begin position="191"/>
        <end position="198"/>
    </location>
    <ligand>
        <name>ATP</name>
        <dbReference type="ChEBI" id="CHEBI:30616"/>
    </ligand>
</feature>
<protein>
    <recommendedName>
        <fullName>Probable helicase A859L</fullName>
        <ecNumber>3.6.4.-</ecNumber>
    </recommendedName>
</protein>